<protein>
    <recommendedName>
        <fullName evidence="1">Fructose-1,6-bisphosphatase class 1 1</fullName>
        <shortName evidence="1">FBPase class 1 1</shortName>
        <ecNumber evidence="1">3.1.3.11</ecNumber>
    </recommendedName>
    <alternativeName>
        <fullName evidence="1">D-fructose-1,6-bisphosphate 1-phosphohydrolase class 1 1</fullName>
    </alternativeName>
</protein>
<organism>
    <name type="scientific">Cupriavidus necator (strain ATCC 17699 / DSM 428 / KCTC 22496 / NCIMB 10442 / H16 / Stanier 337)</name>
    <name type="common">Ralstonia eutropha</name>
    <dbReference type="NCBI Taxonomy" id="381666"/>
    <lineage>
        <taxon>Bacteria</taxon>
        <taxon>Pseudomonadati</taxon>
        <taxon>Pseudomonadota</taxon>
        <taxon>Betaproteobacteria</taxon>
        <taxon>Burkholderiales</taxon>
        <taxon>Burkholderiaceae</taxon>
        <taxon>Cupriavidus</taxon>
    </lineage>
</organism>
<accession>Q0KCY0</accession>
<reference key="1">
    <citation type="journal article" date="2006" name="Nat. Biotechnol.">
        <title>Genome sequence of the bioplastic-producing 'Knallgas' bacterium Ralstonia eutropha H16.</title>
        <authorList>
            <person name="Pohlmann A."/>
            <person name="Fricke W.F."/>
            <person name="Reinecke F."/>
            <person name="Kusian B."/>
            <person name="Liesegang H."/>
            <person name="Cramm R."/>
            <person name="Eitinger T."/>
            <person name="Ewering C."/>
            <person name="Poetter M."/>
            <person name="Schwartz E."/>
            <person name="Strittmatter A."/>
            <person name="Voss I."/>
            <person name="Gottschalk G."/>
            <person name="Steinbuechel A."/>
            <person name="Friedrich B."/>
            <person name="Bowien B."/>
        </authorList>
    </citation>
    <scope>NUCLEOTIDE SEQUENCE [LARGE SCALE GENOMIC DNA]</scope>
    <source>
        <strain>ATCC 17699 / DSM 428 / KCTC 22496 / NCIMB 10442 / H16 / Stanier 337</strain>
    </source>
</reference>
<name>F16A1_CUPNH</name>
<keyword id="KW-0119">Carbohydrate metabolism</keyword>
<keyword id="KW-0963">Cytoplasm</keyword>
<keyword id="KW-0378">Hydrolase</keyword>
<keyword id="KW-0460">Magnesium</keyword>
<keyword id="KW-0479">Metal-binding</keyword>
<keyword id="KW-1185">Reference proteome</keyword>
<proteinExistence type="inferred from homology"/>
<gene>
    <name evidence="1" type="primary">fbp1</name>
    <name type="ordered locus">H16_A0999</name>
</gene>
<sequence length="338" mass="37505">MTRISLTRYLVEEQRKHNTIQPELRLLIEVVARACKAISNAVSKGALAGVLGSAGTGNVQGETQQKLDVIANEVLLDANEWGGHLAAMASEEMESFYEIPNRYPKGEYLLMFDPLDGSSNIDVNVSIGTIFSVLHMPKPGQTVTEADFMQPGTHQVAAGYAVYGPQTTLVLTVGNGVHMFTLDREAGSFVLTHSNVTIPDDTKEFAINMSNMRHWAPPVRRYIDECLAGEEGPRGKNFNMRWVASMVADVHRILTRGGVFMYPWDKREPEKPGKLRLMYEANPMAMLVEQAGGAATNGHQRIMDVQPEKLHQRVSVILGSKNEVERVTRYHLEAEDKA</sequence>
<feature type="chain" id="PRO_0000364660" description="Fructose-1,6-bisphosphatase class 1 1">
    <location>
        <begin position="1"/>
        <end position="338"/>
    </location>
</feature>
<feature type="binding site" evidence="1">
    <location>
        <position position="91"/>
    </location>
    <ligand>
        <name>Mg(2+)</name>
        <dbReference type="ChEBI" id="CHEBI:18420"/>
        <label>1</label>
    </ligand>
</feature>
<feature type="binding site" evidence="1">
    <location>
        <position position="113"/>
    </location>
    <ligand>
        <name>Mg(2+)</name>
        <dbReference type="ChEBI" id="CHEBI:18420"/>
        <label>1</label>
    </ligand>
</feature>
<feature type="binding site" evidence="1">
    <location>
        <position position="113"/>
    </location>
    <ligand>
        <name>Mg(2+)</name>
        <dbReference type="ChEBI" id="CHEBI:18420"/>
        <label>2</label>
    </ligand>
</feature>
<feature type="binding site" evidence="1">
    <location>
        <position position="115"/>
    </location>
    <ligand>
        <name>Mg(2+)</name>
        <dbReference type="ChEBI" id="CHEBI:18420"/>
        <label>1</label>
    </ligand>
</feature>
<feature type="binding site" evidence="1">
    <location>
        <begin position="116"/>
        <end position="119"/>
    </location>
    <ligand>
        <name>substrate</name>
    </ligand>
</feature>
<feature type="binding site" evidence="1">
    <location>
        <position position="116"/>
    </location>
    <ligand>
        <name>Mg(2+)</name>
        <dbReference type="ChEBI" id="CHEBI:18420"/>
        <label>2</label>
    </ligand>
</feature>
<feature type="binding site" evidence="1">
    <location>
        <position position="208"/>
    </location>
    <ligand>
        <name>substrate</name>
    </ligand>
</feature>
<feature type="binding site" evidence="1">
    <location>
        <position position="274"/>
    </location>
    <ligand>
        <name>substrate</name>
    </ligand>
</feature>
<feature type="binding site" evidence="1">
    <location>
        <position position="280"/>
    </location>
    <ligand>
        <name>Mg(2+)</name>
        <dbReference type="ChEBI" id="CHEBI:18420"/>
        <label>2</label>
    </ligand>
</feature>
<comment type="catalytic activity">
    <reaction evidence="1">
        <text>beta-D-fructose 1,6-bisphosphate + H2O = beta-D-fructose 6-phosphate + phosphate</text>
        <dbReference type="Rhea" id="RHEA:11064"/>
        <dbReference type="ChEBI" id="CHEBI:15377"/>
        <dbReference type="ChEBI" id="CHEBI:32966"/>
        <dbReference type="ChEBI" id="CHEBI:43474"/>
        <dbReference type="ChEBI" id="CHEBI:57634"/>
        <dbReference type="EC" id="3.1.3.11"/>
    </reaction>
</comment>
<comment type="cofactor">
    <cofactor evidence="1">
        <name>Mg(2+)</name>
        <dbReference type="ChEBI" id="CHEBI:18420"/>
    </cofactor>
    <text evidence="1">Binds 2 magnesium ions per subunit.</text>
</comment>
<comment type="pathway">
    <text evidence="1">Carbohydrate biosynthesis; gluconeogenesis.</text>
</comment>
<comment type="subunit">
    <text evidence="1">Homotetramer.</text>
</comment>
<comment type="subcellular location">
    <subcellularLocation>
        <location evidence="1">Cytoplasm</location>
    </subcellularLocation>
</comment>
<comment type="similarity">
    <text evidence="1">Belongs to the FBPase class 1 family.</text>
</comment>
<evidence type="ECO:0000255" key="1">
    <source>
        <dbReference type="HAMAP-Rule" id="MF_01855"/>
    </source>
</evidence>
<dbReference type="EC" id="3.1.3.11" evidence="1"/>
<dbReference type="EMBL" id="AM260479">
    <property type="protein sequence ID" value="CAJ92141.1"/>
    <property type="molecule type" value="Genomic_DNA"/>
</dbReference>
<dbReference type="RefSeq" id="WP_011614834.1">
    <property type="nucleotide sequence ID" value="NC_008313.1"/>
</dbReference>
<dbReference type="SMR" id="Q0KCY0"/>
<dbReference type="STRING" id="381666.H16_A0999"/>
<dbReference type="KEGG" id="reh:H16_A0999"/>
<dbReference type="PATRIC" id="fig|381666.6.peg.1377"/>
<dbReference type="eggNOG" id="COG0158">
    <property type="taxonomic scope" value="Bacteria"/>
</dbReference>
<dbReference type="HOGENOM" id="CLU_039977_0_0_4"/>
<dbReference type="OrthoDB" id="9806756at2"/>
<dbReference type="UniPathway" id="UPA00138"/>
<dbReference type="Proteomes" id="UP000008210">
    <property type="component" value="Chromosome 1"/>
</dbReference>
<dbReference type="GO" id="GO:0005829">
    <property type="term" value="C:cytosol"/>
    <property type="evidence" value="ECO:0007669"/>
    <property type="project" value="TreeGrafter"/>
</dbReference>
<dbReference type="GO" id="GO:0042132">
    <property type="term" value="F:fructose 1,6-bisphosphate 1-phosphatase activity"/>
    <property type="evidence" value="ECO:0007669"/>
    <property type="project" value="UniProtKB-UniRule"/>
</dbReference>
<dbReference type="GO" id="GO:0000287">
    <property type="term" value="F:magnesium ion binding"/>
    <property type="evidence" value="ECO:0007669"/>
    <property type="project" value="UniProtKB-UniRule"/>
</dbReference>
<dbReference type="GO" id="GO:0030388">
    <property type="term" value="P:fructose 1,6-bisphosphate metabolic process"/>
    <property type="evidence" value="ECO:0007669"/>
    <property type="project" value="TreeGrafter"/>
</dbReference>
<dbReference type="GO" id="GO:0006002">
    <property type="term" value="P:fructose 6-phosphate metabolic process"/>
    <property type="evidence" value="ECO:0007669"/>
    <property type="project" value="TreeGrafter"/>
</dbReference>
<dbReference type="GO" id="GO:0006000">
    <property type="term" value="P:fructose metabolic process"/>
    <property type="evidence" value="ECO:0007669"/>
    <property type="project" value="TreeGrafter"/>
</dbReference>
<dbReference type="GO" id="GO:0006094">
    <property type="term" value="P:gluconeogenesis"/>
    <property type="evidence" value="ECO:0007669"/>
    <property type="project" value="UniProtKB-UniRule"/>
</dbReference>
<dbReference type="GO" id="GO:0005986">
    <property type="term" value="P:sucrose biosynthetic process"/>
    <property type="evidence" value="ECO:0007669"/>
    <property type="project" value="TreeGrafter"/>
</dbReference>
<dbReference type="CDD" id="cd00354">
    <property type="entry name" value="FBPase"/>
    <property type="match status" value="1"/>
</dbReference>
<dbReference type="FunFam" id="3.30.540.10:FF:000006">
    <property type="entry name" value="Fructose-1,6-bisphosphatase class 1"/>
    <property type="match status" value="1"/>
</dbReference>
<dbReference type="FunFam" id="3.40.190.80:FF:000011">
    <property type="entry name" value="Fructose-1,6-bisphosphatase class 1"/>
    <property type="match status" value="1"/>
</dbReference>
<dbReference type="Gene3D" id="3.40.190.80">
    <property type="match status" value="1"/>
</dbReference>
<dbReference type="Gene3D" id="3.30.540.10">
    <property type="entry name" value="Fructose-1,6-Bisphosphatase, subunit A, domain 1"/>
    <property type="match status" value="1"/>
</dbReference>
<dbReference type="HAMAP" id="MF_01855">
    <property type="entry name" value="FBPase_class1"/>
    <property type="match status" value="1"/>
</dbReference>
<dbReference type="InterPro" id="IPR044015">
    <property type="entry name" value="FBPase_C_dom"/>
</dbReference>
<dbReference type="InterPro" id="IPR000146">
    <property type="entry name" value="FBPase_class-1"/>
</dbReference>
<dbReference type="InterPro" id="IPR033391">
    <property type="entry name" value="FBPase_N"/>
</dbReference>
<dbReference type="InterPro" id="IPR028343">
    <property type="entry name" value="FBPtase"/>
</dbReference>
<dbReference type="NCBIfam" id="NF006778">
    <property type="entry name" value="PRK09293.1-1"/>
    <property type="match status" value="1"/>
</dbReference>
<dbReference type="NCBIfam" id="NF006779">
    <property type="entry name" value="PRK09293.1-3"/>
    <property type="match status" value="1"/>
</dbReference>
<dbReference type="NCBIfam" id="NF006780">
    <property type="entry name" value="PRK09293.1-4"/>
    <property type="match status" value="1"/>
</dbReference>
<dbReference type="PANTHER" id="PTHR11556">
    <property type="entry name" value="FRUCTOSE-1,6-BISPHOSPHATASE-RELATED"/>
    <property type="match status" value="1"/>
</dbReference>
<dbReference type="PANTHER" id="PTHR11556:SF35">
    <property type="entry name" value="SEDOHEPTULOSE-1,7-BISPHOSPHATASE, CHLOROPLASTIC"/>
    <property type="match status" value="1"/>
</dbReference>
<dbReference type="Pfam" id="PF00316">
    <property type="entry name" value="FBPase"/>
    <property type="match status" value="1"/>
</dbReference>
<dbReference type="Pfam" id="PF18913">
    <property type="entry name" value="FBPase_C"/>
    <property type="match status" value="1"/>
</dbReference>
<dbReference type="PIRSF" id="PIRSF500210">
    <property type="entry name" value="FBPtase"/>
    <property type="match status" value="1"/>
</dbReference>
<dbReference type="PIRSF" id="PIRSF000904">
    <property type="entry name" value="FBPtase_SBPase"/>
    <property type="match status" value="1"/>
</dbReference>
<dbReference type="PRINTS" id="PR00115">
    <property type="entry name" value="F16BPHPHTASE"/>
</dbReference>
<dbReference type="SUPFAM" id="SSF56655">
    <property type="entry name" value="Carbohydrate phosphatase"/>
    <property type="match status" value="1"/>
</dbReference>